<accession>O81433</accession>
<dbReference type="EMBL" id="AJ866967">
    <property type="protein sequence ID" value="CAI29443.1"/>
    <property type="molecule type" value="mRNA"/>
</dbReference>
<dbReference type="EMBL" id="AF075598">
    <property type="protein sequence ID" value="AAC28213.1"/>
    <property type="molecule type" value="Genomic_DNA"/>
</dbReference>
<dbReference type="EMBL" id="AL161499">
    <property type="protein sequence ID" value="CAB77876.1"/>
    <property type="molecule type" value="Genomic_DNA"/>
</dbReference>
<dbReference type="EMBL" id="CP002687">
    <property type="protein sequence ID" value="AEE82367.1"/>
    <property type="molecule type" value="Genomic_DNA"/>
</dbReference>
<dbReference type="EMBL" id="DQ056643">
    <property type="protein sequence ID" value="AAY78791.1"/>
    <property type="molecule type" value="mRNA"/>
</dbReference>
<dbReference type="EMBL" id="BT030662">
    <property type="protein sequence ID" value="ABR46242.1"/>
    <property type="molecule type" value="mRNA"/>
</dbReference>
<dbReference type="PIR" id="T01466">
    <property type="entry name" value="T01466"/>
</dbReference>
<dbReference type="RefSeq" id="NP_192317.1">
    <property type="nucleotide sequence ID" value="NM_116646.3"/>
</dbReference>
<dbReference type="SMR" id="O81433"/>
<dbReference type="FunCoup" id="O81433">
    <property type="interactions" value="2723"/>
</dbReference>
<dbReference type="STRING" id="3702.O81433"/>
<dbReference type="PaxDb" id="3702-AT4G04080.1"/>
<dbReference type="ProteomicsDB" id="250685"/>
<dbReference type="EnsemblPlants" id="AT4G04080.1">
    <property type="protein sequence ID" value="AT4G04080.1"/>
    <property type="gene ID" value="AT4G04080"/>
</dbReference>
<dbReference type="GeneID" id="825719"/>
<dbReference type="Gramene" id="AT4G04080.1">
    <property type="protein sequence ID" value="AT4G04080.1"/>
    <property type="gene ID" value="AT4G04080"/>
</dbReference>
<dbReference type="KEGG" id="ath:AT4G04080"/>
<dbReference type="Araport" id="AT4G04080"/>
<dbReference type="TAIR" id="AT4G04080">
    <property type="gene designation" value="ISU3"/>
</dbReference>
<dbReference type="eggNOG" id="KOG3361">
    <property type="taxonomic scope" value="Eukaryota"/>
</dbReference>
<dbReference type="HOGENOM" id="CLU_079283_1_2_1"/>
<dbReference type="InParanoid" id="O81433"/>
<dbReference type="OMA" id="PQCGDVM"/>
<dbReference type="OrthoDB" id="1925777at2759"/>
<dbReference type="PhylomeDB" id="O81433"/>
<dbReference type="UniPathway" id="UPA00266"/>
<dbReference type="PRO" id="PR:O81433"/>
<dbReference type="Proteomes" id="UP000006548">
    <property type="component" value="Chromosome 4"/>
</dbReference>
<dbReference type="ExpressionAtlas" id="O81433">
    <property type="expression patterns" value="baseline and differential"/>
</dbReference>
<dbReference type="GO" id="GO:0005829">
    <property type="term" value="C:cytosol"/>
    <property type="evidence" value="ECO:0007005"/>
    <property type="project" value="TAIR"/>
</dbReference>
<dbReference type="GO" id="GO:0005759">
    <property type="term" value="C:mitochondrial matrix"/>
    <property type="evidence" value="ECO:0007669"/>
    <property type="project" value="UniProtKB-SubCell"/>
</dbReference>
<dbReference type="GO" id="GO:0005739">
    <property type="term" value="C:mitochondrion"/>
    <property type="evidence" value="ECO:0000314"/>
    <property type="project" value="TAIR"/>
</dbReference>
<dbReference type="GO" id="GO:0051537">
    <property type="term" value="F:2 iron, 2 sulfur cluster binding"/>
    <property type="evidence" value="ECO:0007669"/>
    <property type="project" value="UniProtKB-KW"/>
</dbReference>
<dbReference type="GO" id="GO:0005506">
    <property type="term" value="F:iron ion binding"/>
    <property type="evidence" value="ECO:0007669"/>
    <property type="project" value="InterPro"/>
</dbReference>
<dbReference type="GO" id="GO:0005198">
    <property type="term" value="F:structural molecule activity"/>
    <property type="evidence" value="ECO:0000250"/>
    <property type="project" value="TAIR"/>
</dbReference>
<dbReference type="GO" id="GO:0016226">
    <property type="term" value="P:iron-sulfur cluster assembly"/>
    <property type="evidence" value="ECO:0007669"/>
    <property type="project" value="InterPro"/>
</dbReference>
<dbReference type="CDD" id="cd06664">
    <property type="entry name" value="IscU_like"/>
    <property type="match status" value="1"/>
</dbReference>
<dbReference type="FunFam" id="3.90.1010.10:FF:000001">
    <property type="entry name" value="Iron-sulfur cluster assembly scaffold protein IscU"/>
    <property type="match status" value="1"/>
</dbReference>
<dbReference type="Gene3D" id="3.90.1010.10">
    <property type="match status" value="1"/>
</dbReference>
<dbReference type="InterPro" id="IPR011339">
    <property type="entry name" value="ISCU"/>
</dbReference>
<dbReference type="InterPro" id="IPR002871">
    <property type="entry name" value="NIF_FeS_clus_asmbl_NifU_N"/>
</dbReference>
<dbReference type="NCBIfam" id="TIGR01999">
    <property type="entry name" value="iscU"/>
    <property type="match status" value="1"/>
</dbReference>
<dbReference type="PANTHER" id="PTHR10093">
    <property type="entry name" value="IRON-SULFUR CLUSTER ASSEMBLY ENZYME NIFU HOMOLOG"/>
    <property type="match status" value="1"/>
</dbReference>
<dbReference type="Pfam" id="PF01592">
    <property type="entry name" value="NifU_N"/>
    <property type="match status" value="1"/>
</dbReference>
<dbReference type="SUPFAM" id="SSF82649">
    <property type="entry name" value="SufE/NifU"/>
    <property type="match status" value="1"/>
</dbReference>
<feature type="transit peptide" description="Mitochondrion" evidence="3">
    <location>
        <begin position="1"/>
        <end position="49"/>
    </location>
</feature>
<feature type="chain" id="PRO_0000415322" description="Iron-sulfur cluster assembly protein 3">
    <location>
        <begin position="50"/>
        <end position="171"/>
    </location>
</feature>
<name>ISU3_ARATH</name>
<organism>
    <name type="scientific">Arabidopsis thaliana</name>
    <name type="common">Mouse-ear cress</name>
    <dbReference type="NCBI Taxonomy" id="3702"/>
    <lineage>
        <taxon>Eukaryota</taxon>
        <taxon>Viridiplantae</taxon>
        <taxon>Streptophyta</taxon>
        <taxon>Embryophyta</taxon>
        <taxon>Tracheophyta</taxon>
        <taxon>Spermatophyta</taxon>
        <taxon>Magnoliopsida</taxon>
        <taxon>eudicotyledons</taxon>
        <taxon>Gunneridae</taxon>
        <taxon>Pentapetalae</taxon>
        <taxon>rosids</taxon>
        <taxon>malvids</taxon>
        <taxon>Brassicales</taxon>
        <taxon>Brassicaceae</taxon>
        <taxon>Camelineae</taxon>
        <taxon>Arabidopsis</taxon>
    </lineage>
</organism>
<comment type="function">
    <text evidence="2 5">Scaffold protein for the de novo synthesis of iron-sulfur (Fe-S) clusters within mitochondria, which is required for maturation of both mitochondrial and cytoplasmic [2Fe-2S] and [4Fe-4S] proteins (PubMed:17417719). First, a [2Fe-2S] cluster is transiently assembled on the scaffold protein ISCU (ISU1, ISU2 or ISU3). In a second step, the cluster is released from ISCU, transferred to a glutaredoxin, followed by the formation of mitochondrial [2Fe-2S] proteins, the synthesis of [4Fe-4S] clusters and their target-specific insertion into the recipient apoproteins. Cluster assembly on ISCU depends on the function of the cysteine desulfurase complex NFS1-ISD11, which serves as the sulfur donor for cluster synthesis, the iron-binding protein frataxin as the putative iron donor, and the electron transfer chain comprised of ferredoxin reductase and ferredoxin, which receive their electrons from NADH (By similarity).</text>
</comment>
<comment type="cofactor">
    <cofactor evidence="1">
        <name>[2Fe-2S] cluster</name>
        <dbReference type="ChEBI" id="CHEBI:190135"/>
    </cofactor>
    <text evidence="1">Binds 1 [2Fe-2S] cluster per subunit.</text>
</comment>
<comment type="pathway">
    <text evidence="2">Cofactor biosynthesis; iron-sulfur cluster biosynthesis.</text>
</comment>
<comment type="subunit">
    <text evidence="2">Component of the core Fe-S cluster (ISC) assembly machinery.</text>
</comment>
<comment type="subcellular location">
    <subcellularLocation>
        <location evidence="4">Mitochondrion matrix</location>
    </subcellularLocation>
</comment>
<comment type="tissue specificity">
    <text evidence="4 5">Mostly expressed in flowers and pollen, and, to a lower extent, in leaves and roots.</text>
</comment>
<comment type="similarity">
    <text evidence="6">Belongs to the NifU family.</text>
</comment>
<sequence>MLRQTTKRAFLGLASQNPTPFPVVSRLYHPNVIDHYDNPRNVGSFDKNDPNVGTGLVGAPQCGDVMKLQVKFDGSGQIIDAKFKTFGCGSAIAASSVATEWVKGKSVEEVLTIKNSQIAKHLSLPPVKLHCSMLAEDAIKAAIKNYKEKQDKANGETVETIDSTYLHGIGS</sequence>
<keyword id="KW-0001">2Fe-2S</keyword>
<keyword id="KW-0408">Iron</keyword>
<keyword id="KW-0411">Iron-sulfur</keyword>
<keyword id="KW-0479">Metal-binding</keyword>
<keyword id="KW-0496">Mitochondrion</keyword>
<keyword id="KW-1185">Reference proteome</keyword>
<keyword id="KW-0809">Transit peptide</keyword>
<evidence type="ECO:0000250" key="1">
    <source>
        <dbReference type="UniProtKB" id="O49627"/>
    </source>
</evidence>
<evidence type="ECO:0000250" key="2">
    <source>
        <dbReference type="UniProtKB" id="Q03020"/>
    </source>
</evidence>
<evidence type="ECO:0000255" key="3"/>
<evidence type="ECO:0000269" key="4">
    <source>
    </source>
</evidence>
<evidence type="ECO:0000269" key="5">
    <source>
    </source>
</evidence>
<evidence type="ECO:0000305" key="6"/>
<protein>
    <recommendedName>
        <fullName>Iron-sulfur cluster assembly protein 3</fullName>
        <shortName>AtISU3</shortName>
        <shortName>Protein ISCU-LIKE 3</shortName>
    </recommendedName>
    <alternativeName>
        <fullName>NifU-like N-terminal domain-containing protein ISU3</fullName>
    </alternativeName>
    <alternativeName>
        <fullName>NifU-like protein ISU3</fullName>
    </alternativeName>
</protein>
<gene>
    <name type="primary">ISU3</name>
    <name type="ordered locus">At4g04080</name>
    <name type="ORF">T24H24.11</name>
</gene>
<proteinExistence type="evidence at transcript level"/>
<reference key="1">
    <citation type="journal article" date="2005" name="FEBS Lett.">
        <title>Mitochondrial localization of Arabidopsis thaliana Isu Fe-S scaffold proteins.</title>
        <authorList>
            <person name="Leon S."/>
            <person name="Touraine B."/>
            <person name="Briat J.-F."/>
            <person name="Lobreaux S."/>
        </authorList>
    </citation>
    <scope>NUCLEOTIDE SEQUENCE [MRNA]</scope>
    <scope>SUBCELLULAR LOCATION</scope>
    <scope>TISSUE SPECIFICITY</scope>
    <scope>GENE FAMILY</scope>
    <scope>NOMENCLATURE</scope>
    <source>
        <strain>cv. Columbia</strain>
    </source>
</reference>
<reference key="2">
    <citation type="journal article" date="1999" name="Nature">
        <title>Sequence and analysis of chromosome 4 of the plant Arabidopsis thaliana.</title>
        <authorList>
            <person name="Mayer K.F.X."/>
            <person name="Schueller C."/>
            <person name="Wambutt R."/>
            <person name="Murphy G."/>
            <person name="Volckaert G."/>
            <person name="Pohl T."/>
            <person name="Duesterhoeft A."/>
            <person name="Stiekema W."/>
            <person name="Entian K.-D."/>
            <person name="Terryn N."/>
            <person name="Harris B."/>
            <person name="Ansorge W."/>
            <person name="Brandt P."/>
            <person name="Grivell L.A."/>
            <person name="Rieger M."/>
            <person name="Weichselgartner M."/>
            <person name="de Simone V."/>
            <person name="Obermaier B."/>
            <person name="Mache R."/>
            <person name="Mueller M."/>
            <person name="Kreis M."/>
            <person name="Delseny M."/>
            <person name="Puigdomenech P."/>
            <person name="Watson M."/>
            <person name="Schmidtheini T."/>
            <person name="Reichert B."/>
            <person name="Portetelle D."/>
            <person name="Perez-Alonso M."/>
            <person name="Boutry M."/>
            <person name="Bancroft I."/>
            <person name="Vos P."/>
            <person name="Hoheisel J."/>
            <person name="Zimmermann W."/>
            <person name="Wedler H."/>
            <person name="Ridley P."/>
            <person name="Langham S.-A."/>
            <person name="McCullagh B."/>
            <person name="Bilham L."/>
            <person name="Robben J."/>
            <person name="van der Schueren J."/>
            <person name="Grymonprez B."/>
            <person name="Chuang Y.-J."/>
            <person name="Vandenbussche F."/>
            <person name="Braeken M."/>
            <person name="Weltjens I."/>
            <person name="Voet M."/>
            <person name="Bastiaens I."/>
            <person name="Aert R."/>
            <person name="Defoor E."/>
            <person name="Weitzenegger T."/>
            <person name="Bothe G."/>
            <person name="Ramsperger U."/>
            <person name="Hilbert H."/>
            <person name="Braun M."/>
            <person name="Holzer E."/>
            <person name="Brandt A."/>
            <person name="Peters S."/>
            <person name="van Staveren M."/>
            <person name="Dirkse W."/>
            <person name="Mooijman P."/>
            <person name="Klein Lankhorst R."/>
            <person name="Rose M."/>
            <person name="Hauf J."/>
            <person name="Koetter P."/>
            <person name="Berneiser S."/>
            <person name="Hempel S."/>
            <person name="Feldpausch M."/>
            <person name="Lamberth S."/>
            <person name="Van den Daele H."/>
            <person name="De Keyser A."/>
            <person name="Buysshaert C."/>
            <person name="Gielen J."/>
            <person name="Villarroel R."/>
            <person name="De Clercq R."/>
            <person name="van Montagu M."/>
            <person name="Rogers J."/>
            <person name="Cronin A."/>
            <person name="Quail M.A."/>
            <person name="Bray-Allen S."/>
            <person name="Clark L."/>
            <person name="Doggett J."/>
            <person name="Hall S."/>
            <person name="Kay M."/>
            <person name="Lennard N."/>
            <person name="McLay K."/>
            <person name="Mayes R."/>
            <person name="Pettett A."/>
            <person name="Rajandream M.A."/>
            <person name="Lyne M."/>
            <person name="Benes V."/>
            <person name="Rechmann S."/>
            <person name="Borkova D."/>
            <person name="Bloecker H."/>
            <person name="Scharfe M."/>
            <person name="Grimm M."/>
            <person name="Loehnert T.-H."/>
            <person name="Dose S."/>
            <person name="de Haan M."/>
            <person name="Maarse A.C."/>
            <person name="Schaefer M."/>
            <person name="Mueller-Auer S."/>
            <person name="Gabel C."/>
            <person name="Fuchs M."/>
            <person name="Fartmann B."/>
            <person name="Granderath K."/>
            <person name="Dauner D."/>
            <person name="Herzl A."/>
            <person name="Neumann S."/>
            <person name="Argiriou A."/>
            <person name="Vitale D."/>
            <person name="Liguori R."/>
            <person name="Piravandi E."/>
            <person name="Massenet O."/>
            <person name="Quigley F."/>
            <person name="Clabauld G."/>
            <person name="Muendlein A."/>
            <person name="Felber R."/>
            <person name="Schnabl S."/>
            <person name="Hiller R."/>
            <person name="Schmidt W."/>
            <person name="Lecharny A."/>
            <person name="Aubourg S."/>
            <person name="Chefdor F."/>
            <person name="Cooke R."/>
            <person name="Berger C."/>
            <person name="Monfort A."/>
            <person name="Casacuberta E."/>
            <person name="Gibbons T."/>
            <person name="Weber N."/>
            <person name="Vandenbol M."/>
            <person name="Bargues M."/>
            <person name="Terol J."/>
            <person name="Torres A."/>
            <person name="Perez-Perez A."/>
            <person name="Purnelle B."/>
            <person name="Bent E."/>
            <person name="Johnson S."/>
            <person name="Tacon D."/>
            <person name="Jesse T."/>
            <person name="Heijnen L."/>
            <person name="Schwarz S."/>
            <person name="Scholler P."/>
            <person name="Heber S."/>
            <person name="Francs P."/>
            <person name="Bielke C."/>
            <person name="Frishman D."/>
            <person name="Haase D."/>
            <person name="Lemcke K."/>
            <person name="Mewes H.-W."/>
            <person name="Stocker S."/>
            <person name="Zaccaria P."/>
            <person name="Bevan M."/>
            <person name="Wilson R.K."/>
            <person name="de la Bastide M."/>
            <person name="Habermann K."/>
            <person name="Parnell L."/>
            <person name="Dedhia N."/>
            <person name="Gnoj L."/>
            <person name="Schutz K."/>
            <person name="Huang E."/>
            <person name="Spiegel L."/>
            <person name="Sekhon M."/>
            <person name="Murray J."/>
            <person name="Sheet P."/>
            <person name="Cordes M."/>
            <person name="Abu-Threideh J."/>
            <person name="Stoneking T."/>
            <person name="Kalicki J."/>
            <person name="Graves T."/>
            <person name="Harmon G."/>
            <person name="Edwards J."/>
            <person name="Latreille P."/>
            <person name="Courtney L."/>
            <person name="Cloud J."/>
            <person name="Abbott A."/>
            <person name="Scott K."/>
            <person name="Johnson D."/>
            <person name="Minx P."/>
            <person name="Bentley D."/>
            <person name="Fulton B."/>
            <person name="Miller N."/>
            <person name="Greco T."/>
            <person name="Kemp K."/>
            <person name="Kramer J."/>
            <person name="Fulton L."/>
            <person name="Mardis E."/>
            <person name="Dante M."/>
            <person name="Pepin K."/>
            <person name="Hillier L.W."/>
            <person name="Nelson J."/>
            <person name="Spieth J."/>
            <person name="Ryan E."/>
            <person name="Andrews S."/>
            <person name="Geisel C."/>
            <person name="Layman D."/>
            <person name="Du H."/>
            <person name="Ali J."/>
            <person name="Berghoff A."/>
            <person name="Jones K."/>
            <person name="Drone K."/>
            <person name="Cotton M."/>
            <person name="Joshu C."/>
            <person name="Antonoiu B."/>
            <person name="Zidanic M."/>
            <person name="Strong C."/>
            <person name="Sun H."/>
            <person name="Lamar B."/>
            <person name="Yordan C."/>
            <person name="Ma P."/>
            <person name="Zhong J."/>
            <person name="Preston R."/>
            <person name="Vil D."/>
            <person name="Shekher M."/>
            <person name="Matero A."/>
            <person name="Shah R."/>
            <person name="Swaby I.K."/>
            <person name="O'Shaughnessy A."/>
            <person name="Rodriguez M."/>
            <person name="Hoffman J."/>
            <person name="Till S."/>
            <person name="Granat S."/>
            <person name="Shohdy N."/>
            <person name="Hasegawa A."/>
            <person name="Hameed A."/>
            <person name="Lodhi M."/>
            <person name="Johnson A."/>
            <person name="Chen E."/>
            <person name="Marra M.A."/>
            <person name="Martienssen R."/>
            <person name="McCombie W.R."/>
        </authorList>
    </citation>
    <scope>NUCLEOTIDE SEQUENCE [LARGE SCALE GENOMIC DNA]</scope>
    <source>
        <strain>cv. Columbia</strain>
    </source>
</reference>
<reference key="3">
    <citation type="journal article" date="2017" name="Plant J.">
        <title>Araport11: a complete reannotation of the Arabidopsis thaliana reference genome.</title>
        <authorList>
            <person name="Cheng C.Y."/>
            <person name="Krishnakumar V."/>
            <person name="Chan A.P."/>
            <person name="Thibaud-Nissen F."/>
            <person name="Schobel S."/>
            <person name="Town C.D."/>
        </authorList>
    </citation>
    <scope>GENOME REANNOTATION</scope>
    <source>
        <strain>cv. Columbia</strain>
    </source>
</reference>
<reference key="4">
    <citation type="journal article" date="2006" name="Plant Biotechnol. J.">
        <title>Simultaneous high-throughput recombinational cloning of open reading frames in closed and open configurations.</title>
        <authorList>
            <person name="Underwood B.A."/>
            <person name="Vanderhaeghen R."/>
            <person name="Whitford R."/>
            <person name="Town C.D."/>
            <person name="Hilson P."/>
        </authorList>
    </citation>
    <scope>NUCLEOTIDE SEQUENCE [LARGE SCALE MRNA]</scope>
    <source>
        <strain>cv. Columbia</strain>
    </source>
</reference>
<reference key="5">
    <citation type="submission" date="2007-06" db="EMBL/GenBank/DDBJ databases">
        <title>Arabidopsis ORF clones.</title>
        <authorList>
            <person name="Bautista-Mercan V.R."/>
            <person name="Kim C.J."/>
            <person name="Chen H."/>
            <person name="Quan R."/>
            <person name="De Los Reyes C."/>
            <person name="Ecker J.R."/>
        </authorList>
    </citation>
    <scope>NUCLEOTIDE SEQUENCE [LARGE SCALE MRNA]</scope>
    <source>
        <strain>cv. Columbia</strain>
    </source>
</reference>
<reference key="6">
    <citation type="journal article" date="2007" name="Plant Mol. Biol.">
        <title>Functional analysis of Arabidopsis genes involved in mitochondrial iron-sulfur cluster assembly.</title>
        <authorList>
            <person name="Frazzon A.P.G."/>
            <person name="Ramirez M.V."/>
            <person name="Warek U."/>
            <person name="Balk J."/>
            <person name="Frazzon J."/>
            <person name="Dean D.R."/>
            <person name="Winkel B.S.J."/>
        </authorList>
    </citation>
    <scope>FUNCTION</scope>
    <scope>TISSUE SPECIFICITY</scope>
    <source>
        <strain>cv. Columbia</strain>
    </source>
</reference>